<dbReference type="EC" id="6.3.2.-" evidence="1"/>
<dbReference type="EMBL" id="CP000802">
    <property type="protein sequence ID" value="ABV08558.1"/>
    <property type="molecule type" value="Genomic_DNA"/>
</dbReference>
<dbReference type="RefSeq" id="WP_000004771.1">
    <property type="nucleotide sequence ID" value="NC_009800.1"/>
</dbReference>
<dbReference type="SMR" id="A8A7Q4"/>
<dbReference type="GeneID" id="93777667"/>
<dbReference type="KEGG" id="ecx:EcHS_A4399"/>
<dbReference type="HOGENOM" id="CLU_008255_1_1_6"/>
<dbReference type="GO" id="GO:0005829">
    <property type="term" value="C:cytosol"/>
    <property type="evidence" value="ECO:0007669"/>
    <property type="project" value="TreeGrafter"/>
</dbReference>
<dbReference type="GO" id="GO:0016880">
    <property type="term" value="F:acid-ammonia (or amide) ligase activity"/>
    <property type="evidence" value="ECO:0007669"/>
    <property type="project" value="UniProtKB-UniRule"/>
</dbReference>
<dbReference type="GO" id="GO:0005524">
    <property type="term" value="F:ATP binding"/>
    <property type="evidence" value="ECO:0007669"/>
    <property type="project" value="UniProtKB-UniRule"/>
</dbReference>
<dbReference type="GO" id="GO:0004824">
    <property type="term" value="F:lysine-tRNA ligase activity"/>
    <property type="evidence" value="ECO:0007669"/>
    <property type="project" value="InterPro"/>
</dbReference>
<dbReference type="GO" id="GO:0000049">
    <property type="term" value="F:tRNA binding"/>
    <property type="evidence" value="ECO:0007669"/>
    <property type="project" value="TreeGrafter"/>
</dbReference>
<dbReference type="GO" id="GO:0006430">
    <property type="term" value="P:lysyl-tRNA aminoacylation"/>
    <property type="evidence" value="ECO:0007669"/>
    <property type="project" value="InterPro"/>
</dbReference>
<dbReference type="FunFam" id="3.30.930.10:FF:000017">
    <property type="entry name" value="Elongation factor P--(R)-beta-lysine ligase"/>
    <property type="match status" value="1"/>
</dbReference>
<dbReference type="Gene3D" id="3.30.930.10">
    <property type="entry name" value="Bira Bifunctional Protein, Domain 2"/>
    <property type="match status" value="1"/>
</dbReference>
<dbReference type="HAMAP" id="MF_00174">
    <property type="entry name" value="EF_P_modif_A"/>
    <property type="match status" value="1"/>
</dbReference>
<dbReference type="InterPro" id="IPR004364">
    <property type="entry name" value="Aa-tRNA-synt_II"/>
</dbReference>
<dbReference type="InterPro" id="IPR006195">
    <property type="entry name" value="aa-tRNA-synth_II"/>
</dbReference>
<dbReference type="InterPro" id="IPR045864">
    <property type="entry name" value="aa-tRNA-synth_II/BPL/LPL"/>
</dbReference>
<dbReference type="InterPro" id="IPR004525">
    <property type="entry name" value="EpmA"/>
</dbReference>
<dbReference type="InterPro" id="IPR018149">
    <property type="entry name" value="Lys-tRNA-synth_II_C"/>
</dbReference>
<dbReference type="NCBIfam" id="TIGR00462">
    <property type="entry name" value="genX"/>
    <property type="match status" value="1"/>
</dbReference>
<dbReference type="NCBIfam" id="NF006828">
    <property type="entry name" value="PRK09350.1"/>
    <property type="match status" value="1"/>
</dbReference>
<dbReference type="PANTHER" id="PTHR42918:SF6">
    <property type="entry name" value="ELONGATION FACTOR P--(R)-BETA-LYSINE LIGASE"/>
    <property type="match status" value="1"/>
</dbReference>
<dbReference type="PANTHER" id="PTHR42918">
    <property type="entry name" value="LYSYL-TRNA SYNTHETASE"/>
    <property type="match status" value="1"/>
</dbReference>
<dbReference type="Pfam" id="PF00152">
    <property type="entry name" value="tRNA-synt_2"/>
    <property type="match status" value="1"/>
</dbReference>
<dbReference type="PRINTS" id="PR00982">
    <property type="entry name" value="TRNASYNTHLYS"/>
</dbReference>
<dbReference type="SUPFAM" id="SSF55681">
    <property type="entry name" value="Class II aaRS and biotin synthetases"/>
    <property type="match status" value="1"/>
</dbReference>
<dbReference type="PROSITE" id="PS50862">
    <property type="entry name" value="AA_TRNA_LIGASE_II"/>
    <property type="match status" value="1"/>
</dbReference>
<feature type="chain" id="PRO_1000058327" description="Elongation factor P--(R)-beta-lysine ligase">
    <location>
        <begin position="1"/>
        <end position="325"/>
    </location>
</feature>
<feature type="binding site" evidence="1">
    <location>
        <begin position="76"/>
        <end position="78"/>
    </location>
    <ligand>
        <name>substrate</name>
    </ligand>
</feature>
<feature type="binding site" evidence="1">
    <location>
        <begin position="100"/>
        <end position="102"/>
    </location>
    <ligand>
        <name>ATP</name>
        <dbReference type="ChEBI" id="CHEBI:30616"/>
    </ligand>
</feature>
<feature type="binding site" evidence="1">
    <location>
        <position position="109"/>
    </location>
    <ligand>
        <name>ATP</name>
        <dbReference type="ChEBI" id="CHEBI:30616"/>
    </ligand>
</feature>
<feature type="binding site" evidence="1">
    <location>
        <position position="118"/>
    </location>
    <ligand>
        <name>substrate</name>
    </ligand>
</feature>
<feature type="binding site" evidence="1">
    <location>
        <begin position="244"/>
        <end position="245"/>
    </location>
    <ligand>
        <name>ATP</name>
        <dbReference type="ChEBI" id="CHEBI:30616"/>
    </ligand>
</feature>
<feature type="binding site" evidence="1">
    <location>
        <position position="251"/>
    </location>
    <ligand>
        <name>substrate</name>
    </ligand>
</feature>
<feature type="binding site" evidence="1">
    <location>
        <position position="300"/>
    </location>
    <ligand>
        <name>ATP</name>
        <dbReference type="ChEBI" id="CHEBI:30616"/>
    </ligand>
</feature>
<comment type="function">
    <text evidence="1">With EpmB is involved in the beta-lysylation step of the post-translational modification of translation elongation factor P (EF-P) on 'Lys-34'. Catalyzes the ATP-dependent activation of (R)-beta-lysine produced by EpmB, forming a lysyl-adenylate, from which the beta-lysyl moiety is then transferred to the epsilon-amino group of EF-P 'Lys-34'.</text>
</comment>
<comment type="catalytic activity">
    <reaction evidence="1">
        <text>D-beta-lysine + L-lysyl-[protein] + ATP = N(6)-((3R)-3,6-diaminohexanoyl)-L-lysyl-[protein] + AMP + diphosphate + H(+)</text>
        <dbReference type="Rhea" id="RHEA:83435"/>
        <dbReference type="Rhea" id="RHEA-COMP:9752"/>
        <dbReference type="Rhea" id="RHEA-COMP:20131"/>
        <dbReference type="ChEBI" id="CHEBI:15378"/>
        <dbReference type="ChEBI" id="CHEBI:29969"/>
        <dbReference type="ChEBI" id="CHEBI:30616"/>
        <dbReference type="ChEBI" id="CHEBI:33019"/>
        <dbReference type="ChEBI" id="CHEBI:84138"/>
        <dbReference type="ChEBI" id="CHEBI:156053"/>
        <dbReference type="ChEBI" id="CHEBI:456215"/>
    </reaction>
    <physiologicalReaction direction="left-to-right" evidence="1">
        <dbReference type="Rhea" id="RHEA:83436"/>
    </physiologicalReaction>
</comment>
<comment type="subunit">
    <text evidence="1">Homodimer.</text>
</comment>
<comment type="similarity">
    <text evidence="1">Belongs to the class-II aminoacyl-tRNA synthetase family. EpmA subfamily.</text>
</comment>
<evidence type="ECO:0000255" key="1">
    <source>
        <dbReference type="HAMAP-Rule" id="MF_00174"/>
    </source>
</evidence>
<keyword id="KW-0067">ATP-binding</keyword>
<keyword id="KW-0436">Ligase</keyword>
<keyword id="KW-0547">Nucleotide-binding</keyword>
<proteinExistence type="inferred from homology"/>
<gene>
    <name evidence="1" type="primary">epmA</name>
    <name type="synonym">yjeA</name>
    <name type="ordered locus">EcHS_A4399</name>
</gene>
<accession>A8A7Q4</accession>
<sequence>MSETASWQPSASIPNLLKRAAIMAEIRRFFADRGVLEVETPCMSQATVTDIHLVPFETRFVGPGHSQGMNLWLMTSPEYHMKRLLVAGCGPVFQLCRSFRNEEMGRYHNPEFTMLEWYRPHYDMYRLMNEVDDLLQQVLDCPAAESLSYQQAFLRYLEIDPLSADKTQLREVAAKLDLSNVADTEEDRDTLLQLLFTFGVEPNIGKEKPTFVYHFPASQASLAQISTEDHRVAERFEVYYKGIELANGFHELTDAREQQQRFEQDNRKRAARGLPQHPIDQNLIEALKVGMPDCSGVALGVDRLVMLALGAETLAEVIAFSVDRA</sequence>
<protein>
    <recommendedName>
        <fullName evidence="1">Elongation factor P--(R)-beta-lysine ligase</fullName>
        <shortName evidence="1">EF-P--(R)-beta-lysine ligase</shortName>
        <ecNumber evidence="1">6.3.2.-</ecNumber>
    </recommendedName>
    <alternativeName>
        <fullName evidence="1">EF-P post-translational modification enzyme A</fullName>
    </alternativeName>
    <alternativeName>
        <fullName evidence="1">EF-P-lysine lysyltransferase</fullName>
    </alternativeName>
</protein>
<name>EPMA_ECOHS</name>
<organism>
    <name type="scientific">Escherichia coli O9:H4 (strain HS)</name>
    <dbReference type="NCBI Taxonomy" id="331112"/>
    <lineage>
        <taxon>Bacteria</taxon>
        <taxon>Pseudomonadati</taxon>
        <taxon>Pseudomonadota</taxon>
        <taxon>Gammaproteobacteria</taxon>
        <taxon>Enterobacterales</taxon>
        <taxon>Enterobacteriaceae</taxon>
        <taxon>Escherichia</taxon>
    </lineage>
</organism>
<reference key="1">
    <citation type="journal article" date="2008" name="J. Bacteriol.">
        <title>The pangenome structure of Escherichia coli: comparative genomic analysis of E. coli commensal and pathogenic isolates.</title>
        <authorList>
            <person name="Rasko D.A."/>
            <person name="Rosovitz M.J."/>
            <person name="Myers G.S.A."/>
            <person name="Mongodin E.F."/>
            <person name="Fricke W.F."/>
            <person name="Gajer P."/>
            <person name="Crabtree J."/>
            <person name="Sebaihia M."/>
            <person name="Thomson N.R."/>
            <person name="Chaudhuri R."/>
            <person name="Henderson I.R."/>
            <person name="Sperandio V."/>
            <person name="Ravel J."/>
        </authorList>
    </citation>
    <scope>NUCLEOTIDE SEQUENCE [LARGE SCALE GENOMIC DNA]</scope>
    <source>
        <strain>HS</strain>
    </source>
</reference>